<protein>
    <recommendedName>
        <fullName>Cell division protein DivIVA</fullName>
    </recommendedName>
</protein>
<accession>Q8CWP9</accession>
<proteinExistence type="evidence at protein level"/>
<reference key="1">
    <citation type="journal article" date="2001" name="J. Bacteriol.">
        <title>Genome of the bacterium Streptococcus pneumoniae strain R6.</title>
        <authorList>
            <person name="Hoskins J."/>
            <person name="Alborn W.E. Jr."/>
            <person name="Arnold J."/>
            <person name="Blaszczak L.C."/>
            <person name="Burgett S."/>
            <person name="DeHoff B.S."/>
            <person name="Estrem S.T."/>
            <person name="Fritz L."/>
            <person name="Fu D.-J."/>
            <person name="Fuller W."/>
            <person name="Geringer C."/>
            <person name="Gilmour R."/>
            <person name="Glass J.S."/>
            <person name="Khoja H."/>
            <person name="Kraft A.R."/>
            <person name="Lagace R.E."/>
            <person name="LeBlanc D.J."/>
            <person name="Lee L.N."/>
            <person name="Lefkowitz E.J."/>
            <person name="Lu J."/>
            <person name="Matsushima P."/>
            <person name="McAhren S.M."/>
            <person name="McHenney M."/>
            <person name="McLeaster K."/>
            <person name="Mundy C.W."/>
            <person name="Nicas T.I."/>
            <person name="Norris F.H."/>
            <person name="O'Gara M."/>
            <person name="Peery R.B."/>
            <person name="Robertson G.T."/>
            <person name="Rockey P."/>
            <person name="Sun P.-M."/>
            <person name="Winkler M.E."/>
            <person name="Yang Y."/>
            <person name="Young-Bellido M."/>
            <person name="Zhao G."/>
            <person name="Zook C.A."/>
            <person name="Baltz R.H."/>
            <person name="Jaskunas S.R."/>
            <person name="Rosteck P.R. Jr."/>
            <person name="Skatrud P.L."/>
            <person name="Glass J.I."/>
        </authorList>
    </citation>
    <scope>NUCLEOTIDE SEQUENCE [LARGE SCALE GENOMIC DNA]</scope>
    <source>
        <strain>ATCC BAA-255 / R6</strain>
    </source>
</reference>
<reference key="2">
    <citation type="journal article" date="2003" name="J. Bacteriol.">
        <title>Characterization of divIVA and other genes located in the chromosomal region downstream of the dcw cluster in Streptococcus pneumoniae.</title>
        <authorList>
            <person name="Fadda D."/>
            <person name="Pischedda C."/>
            <person name="Caldara F."/>
            <person name="Whalen M.B."/>
            <person name="Anderluzzi D."/>
            <person name="Domenici E."/>
            <person name="Massidda O."/>
        </authorList>
    </citation>
    <scope>FUNCTION</scope>
    <scope>DISRUPTION PHENOTYPE</scope>
    <source>
        <strain>Rx1</strain>
    </source>
</reference>
<reference key="3">
    <citation type="journal article" date="2007" name="J. Bacteriol.">
        <title>Streptococcus pneumoniae DivIVA: localization and interactions in a MinCD-free context.</title>
        <authorList>
            <person name="Fadda D."/>
            <person name="Santona A."/>
            <person name="D'Ulisse V."/>
            <person name="Ghelardini P."/>
            <person name="Ennas M.G."/>
            <person name="Whalen M.B."/>
            <person name="Massidda O."/>
        </authorList>
    </citation>
    <scope>FUNCTION</scope>
    <scope>SUBCELLULAR LOCATION</scope>
    <scope>PROTEIN INTERACTION</scope>
    <scope>DISRUPTION PHENOTYPE</scope>
    <scope>MUTAGENESIS OF ALA-78</scope>
    <source>
        <strain>Rx1</strain>
    </source>
</reference>
<reference key="4">
    <citation type="journal article" date="2010" name="J. Bacteriol.">
        <title>Identification of multiple substrates of the StkP Ser/Thr protein kinase in Streptococcus pneumoniae.</title>
        <authorList>
            <person name="Novakova L."/>
            <person name="Bezouskova S."/>
            <person name="Pompach P."/>
            <person name="Spidlova P."/>
            <person name="Saskova L."/>
            <person name="Weiser J."/>
            <person name="Branny P."/>
        </authorList>
    </citation>
    <scope>PHOSPHORYLATION BY STKP</scope>
    <scope>IDENTIFICATION BY MASS SPECTROMETRY</scope>
</reference>
<reference key="5">
    <citation type="journal article" date="2012" name="Mol. Microbiol.">
        <title>Mutational dissection of the S/T-kinase StkP reveals crucial roles in cell division of Streptococcus pneumoniae.</title>
        <authorList>
            <person name="Fleurie A."/>
            <person name="Cluzel C."/>
            <person name="Guiral S."/>
            <person name="Freton C."/>
            <person name="Galisson F."/>
            <person name="Zanella-Cleon I."/>
            <person name="Di Guilmi A.M."/>
            <person name="Grangeasse C."/>
        </authorList>
    </citation>
    <scope>PHOSPHORYLATION AT THR-201 BY STKP</scope>
    <scope>PTM</scope>
    <scope>MUTAGENESIS OF THR-201</scope>
    <source>
        <strain>R6 / R800</strain>
    </source>
</reference>
<name>DIV4A_STRR6</name>
<keyword id="KW-0131">Cell cycle</keyword>
<keyword id="KW-0132">Cell division</keyword>
<keyword id="KW-0133">Cell shape</keyword>
<keyword id="KW-0175">Coiled coil</keyword>
<keyword id="KW-0963">Cytoplasm</keyword>
<keyword id="KW-0597">Phosphoprotein</keyword>
<keyword id="KW-1185">Reference proteome</keyword>
<keyword id="KW-0717">Septation</keyword>
<sequence>MPITSLEIKDKTFGTRFRGFDPEEVDEFLDIVVRDYEDLVRANHDKNLRIKSLEERLSYFDEIKDSLSQSVLIAQDTAERVKQAAHERSNNIIHQAEQDAQRLLEEAKYKANEILRQATDNAKKVAVETEELKNKSRVFHQRLKSTIESQLAIVESSDWEDILRPTATYLQTSDEAFKEVVSEVLGEPIPAPIEEEPIDMTRQFSQAEMEELQARIEVADKELSEFEAQIKQEVETPTPVVSPQVEEEPLLIQLAQCMKNQK</sequence>
<gene>
    <name type="primary">divIVA</name>
    <name type="ordered locus">spr1505</name>
</gene>
<dbReference type="EMBL" id="AE007317">
    <property type="protein sequence ID" value="AAL00309.1"/>
    <property type="status" value="ALT_INIT"/>
    <property type="molecule type" value="Genomic_DNA"/>
</dbReference>
<dbReference type="PIR" id="H98059">
    <property type="entry name" value="H98059"/>
</dbReference>
<dbReference type="RefSeq" id="NP_359098.1">
    <property type="nucleotide sequence ID" value="NC_003098.1"/>
</dbReference>
<dbReference type="RefSeq" id="WP_001810114.1">
    <property type="nucleotide sequence ID" value="NC_003098.1"/>
</dbReference>
<dbReference type="SMR" id="Q8CWP9"/>
<dbReference type="IntAct" id="Q8CWP9">
    <property type="interactions" value="1"/>
</dbReference>
<dbReference type="STRING" id="171101.spr1505"/>
<dbReference type="iPTMnet" id="Q8CWP9"/>
<dbReference type="KEGG" id="spr:spr1505"/>
<dbReference type="PATRIC" id="fig|171101.6.peg.1625"/>
<dbReference type="eggNOG" id="COG3599">
    <property type="taxonomic scope" value="Bacteria"/>
</dbReference>
<dbReference type="HOGENOM" id="CLU_076854_0_0_9"/>
<dbReference type="Proteomes" id="UP000000586">
    <property type="component" value="Chromosome"/>
</dbReference>
<dbReference type="GO" id="GO:0005737">
    <property type="term" value="C:cytoplasm"/>
    <property type="evidence" value="ECO:0007669"/>
    <property type="project" value="UniProtKB-SubCell"/>
</dbReference>
<dbReference type="GO" id="GO:0000917">
    <property type="term" value="P:division septum assembly"/>
    <property type="evidence" value="ECO:0007669"/>
    <property type="project" value="UniProtKB-KW"/>
</dbReference>
<dbReference type="GO" id="GO:0009273">
    <property type="term" value="P:peptidoglycan-based cell wall biogenesis"/>
    <property type="evidence" value="ECO:0000318"/>
    <property type="project" value="GO_Central"/>
</dbReference>
<dbReference type="GO" id="GO:0008360">
    <property type="term" value="P:regulation of cell shape"/>
    <property type="evidence" value="ECO:0007669"/>
    <property type="project" value="UniProtKB-KW"/>
</dbReference>
<dbReference type="Gene3D" id="6.10.250.660">
    <property type="match status" value="1"/>
</dbReference>
<dbReference type="InterPro" id="IPR019933">
    <property type="entry name" value="DivIVA_domain"/>
</dbReference>
<dbReference type="InterPro" id="IPR007793">
    <property type="entry name" value="DivIVA_fam"/>
</dbReference>
<dbReference type="NCBIfam" id="TIGR03544">
    <property type="entry name" value="DivI1A_domain"/>
    <property type="match status" value="1"/>
</dbReference>
<dbReference type="PANTHER" id="PTHR35794">
    <property type="entry name" value="CELL DIVISION PROTEIN DIVIVA"/>
    <property type="match status" value="1"/>
</dbReference>
<dbReference type="PANTHER" id="PTHR35794:SF2">
    <property type="entry name" value="CELL DIVISION PROTEIN DIVIVA"/>
    <property type="match status" value="1"/>
</dbReference>
<dbReference type="Pfam" id="PF05103">
    <property type="entry name" value="DivIVA"/>
    <property type="match status" value="1"/>
</dbReference>
<evidence type="ECO:0000255" key="1"/>
<evidence type="ECO:0000269" key="2">
    <source>
    </source>
</evidence>
<evidence type="ECO:0000269" key="3">
    <source>
    </source>
</evidence>
<evidence type="ECO:0000269" key="4">
    <source>
    </source>
</evidence>
<evidence type="ECO:0000269" key="5">
    <source>
    </source>
</evidence>
<evidence type="ECO:0000305" key="6"/>
<organism>
    <name type="scientific">Streptococcus pneumoniae (strain ATCC BAA-255 / R6)</name>
    <dbReference type="NCBI Taxonomy" id="171101"/>
    <lineage>
        <taxon>Bacteria</taxon>
        <taxon>Bacillati</taxon>
        <taxon>Bacillota</taxon>
        <taxon>Bacilli</taxon>
        <taxon>Lactobacillales</taxon>
        <taxon>Streptococcaceae</taxon>
        <taxon>Streptococcus</taxon>
    </lineage>
</organism>
<feature type="chain" id="PRO_0000418151" description="Cell division protein DivIVA">
    <location>
        <begin position="1"/>
        <end position="262"/>
    </location>
</feature>
<feature type="coiled-coil region" evidence="1">
    <location>
        <begin position="34"/>
        <end position="135"/>
    </location>
</feature>
<feature type="coiled-coil region" evidence="1">
    <location>
        <begin position="199"/>
        <end position="236"/>
    </location>
</feature>
<feature type="modified residue" description="Phosphothreonine" evidence="5">
    <location>
        <position position="201"/>
    </location>
</feature>
<feature type="mutagenesis site" description="Mutant cells are impaired in cell division (they form chains) but not in chromosome segregation. They display an altered localization profile, and although the protein is still visible at the septum and the poles, the majority is located diffusely around the cell. Still able to self-interact. Some protein interactions are significantly reduced or absent." evidence="3">
    <original>A</original>
    <variation>T</variation>
    <location>
        <position position="78"/>
    </location>
</feature>
<feature type="mutagenesis site" description="Loss of phosphorylation. Cells display severely altered morphology compared with wild-type strain cells. A significant number of cells has an elongated size and forms a giant polar bulge, with a hampered septum closure at the base of the bulge. These cells show a diffuse spatial localization of nascent peptidoglycan around the bulge, but more intense at the top of the bulge (old cell pole)." evidence="5">
    <original>T</original>
    <variation>A</variation>
    <location>
        <position position="201"/>
    </location>
</feature>
<comment type="function">
    <text evidence="2 3">Appears to have a multifaceted role in controlling cell morphology, completion of cell division and separation, as well as chromosome segregation, through a complex interaction web. Seems to be primarily involved in the formation and maturation of the cell poles.</text>
</comment>
<comment type="subunit">
    <text>Interacts with itself and with a number of cell division proteins, including FtsZ and Spo0J.</text>
</comment>
<comment type="subcellular location">
    <subcellularLocation>
        <location evidence="3">Cytoplasm</location>
    </subcellularLocation>
    <text>Localizes primarily near the membrane at the midcell division sites (as a ring) and at the cell poles (as dots) simultaneously. DivIVA is recruited to the septum at a later stage than FtsZ and is retained at the poles after cell separation.</text>
</comment>
<comment type="PTM">
    <text evidence="4 5">Phosphorylated on Thr-201 by StkP in vivo. Phosphorylation would regulate the scaffold DivIVA function directing cell wall synthesis and the formation of mature poles.</text>
</comment>
<comment type="disruption phenotype">
    <text evidence="2 3">Inactivation of divIVA results in severe growth inhibition and defects in cell shape, nucleoid segregation, and cell division, since it leads to the formation of chains of unseparated, morphologically altered cells with incomplete septa, often devoid of nucleoids (PubMed:14526035). However, a further study (PubMed:17098892) showed that the anucleate cells observed in the divIVA null mutant (corresponding to 15% to 20% of the population) were indeed dead cells in the process of lysing. All the cell division proteins tested are localized in the divIVA null mutant, although the percentage of cells having constricted Z rings is significantly reduced (PubMed:17098892).</text>
</comment>
<comment type="similarity">
    <text evidence="6">Belongs to the DivIVA family.</text>
</comment>
<comment type="sequence caution" evidence="6">
    <conflict type="erroneous initiation">
        <sequence resource="EMBL-CDS" id="AAL00309"/>
    </conflict>
    <text>Extended N-terminus.</text>
</comment>